<feature type="chain" id="PRO_0000307400" description="Ropporin-1-like protein">
    <location>
        <begin position="1"/>
        <end position="218"/>
    </location>
</feature>
<feature type="domain" description="RIIa">
    <location>
        <begin position="17"/>
        <end position="54"/>
    </location>
</feature>
<gene>
    <name type="primary">Ropn1l</name>
    <name type="synonym">Asp</name>
</gene>
<sequence length="218" mass="24516">MPLPDTMFCAQQIHIPPELPDILKQFTKAAIRTQPADVLQWSAGYFSALSRGDPLPVKDRIEMPVATQKTDTGLTQGLLKVLHKQCSHKQYVELADLEKKWKNLCLPVEKLRTILELDPCEDKIEWIKFLALGCSSLGRTLNTAMKNVCEILTSDPEGGPARIPFETFAYVYQYLSGLDPELPAVETENYLTSLRLMSESRKNGMIGLSDFFVGKKII</sequence>
<evidence type="ECO:0000250" key="1">
    <source>
        <dbReference type="UniProtKB" id="Q96C74"/>
    </source>
</evidence>
<evidence type="ECO:0000269" key="2">
    <source>
    </source>
</evidence>
<evidence type="ECO:0000269" key="3">
    <source>
    </source>
</evidence>
<evidence type="ECO:0000269" key="4">
    <source>
    </source>
</evidence>
<evidence type="ECO:0000269" key="5">
    <source>
    </source>
</evidence>
<evidence type="ECO:0000269" key="6">
    <source>
    </source>
</evidence>
<evidence type="ECO:0000269" key="7">
    <source>
    </source>
</evidence>
<evidence type="ECO:0000305" key="8"/>
<accession>Q9EQ00</accession>
<accession>Q6P8Z9</accession>
<protein>
    <recommendedName>
        <fullName>Ropporin-1-like protein</fullName>
    </recommendedName>
    <alternativeName>
        <fullName>AKAP-associated sperm protein</fullName>
    </alternativeName>
</protein>
<name>ROP1L_MOUSE</name>
<keyword id="KW-0966">Cell projection</keyword>
<keyword id="KW-0969">Cilium</keyword>
<keyword id="KW-0282">Flagellum</keyword>
<keyword id="KW-1185">Reference proteome</keyword>
<keyword id="KW-0832">Ubl conjugation</keyword>
<dbReference type="EMBL" id="AF305427">
    <property type="protein sequence ID" value="AAG40851.1"/>
    <property type="status" value="ALT_FRAME"/>
    <property type="molecule type" value="mRNA"/>
</dbReference>
<dbReference type="EMBL" id="BC048680">
    <property type="protein sequence ID" value="AAH48680.1"/>
    <property type="molecule type" value="mRNA"/>
</dbReference>
<dbReference type="EMBL" id="BC060990">
    <property type="protein sequence ID" value="AAH60990.1"/>
    <property type="molecule type" value="mRNA"/>
</dbReference>
<dbReference type="CCDS" id="CCDS37053.1"/>
<dbReference type="RefSeq" id="NP_665851.2">
    <property type="nucleotide sequence ID" value="NM_145852.2"/>
</dbReference>
<dbReference type="SMR" id="Q9EQ00"/>
<dbReference type="ComplexPortal" id="CPX-8161">
    <property type="entry name" value="Radial spoke complex, ciliiar variant"/>
</dbReference>
<dbReference type="ComplexPortal" id="CPX-8162">
    <property type="entry name" value="Radial spoke complex, flagellar variant"/>
</dbReference>
<dbReference type="FunCoup" id="Q9EQ00">
    <property type="interactions" value="104"/>
</dbReference>
<dbReference type="STRING" id="10090.ENSMUSP00000106038"/>
<dbReference type="iPTMnet" id="Q9EQ00"/>
<dbReference type="PhosphoSitePlus" id="Q9EQ00"/>
<dbReference type="SwissPalm" id="Q9EQ00"/>
<dbReference type="PaxDb" id="10090-ENSMUSP00000106038"/>
<dbReference type="PeptideAtlas" id="Q9EQ00"/>
<dbReference type="ProteomicsDB" id="260830"/>
<dbReference type="Antibodypedia" id="22503">
    <property type="antibodies" value="178 antibodies from 23 providers"/>
</dbReference>
<dbReference type="DNASU" id="252967"/>
<dbReference type="Ensembl" id="ENSMUST00000110408.3">
    <property type="protein sequence ID" value="ENSMUSP00000106038.2"/>
    <property type="gene ID" value="ENSMUSG00000022236.11"/>
</dbReference>
<dbReference type="GeneID" id="252967"/>
<dbReference type="KEGG" id="mmu:252967"/>
<dbReference type="AGR" id="MGI:2182357"/>
<dbReference type="CTD" id="83853"/>
<dbReference type="MGI" id="MGI:2182357">
    <property type="gene designation" value="Ropn1l"/>
</dbReference>
<dbReference type="VEuPathDB" id="HostDB:ENSMUSG00000022236"/>
<dbReference type="eggNOG" id="ENOG502QTNR">
    <property type="taxonomic scope" value="Eukaryota"/>
</dbReference>
<dbReference type="GeneTree" id="ENSGT00390000012731"/>
<dbReference type="InParanoid" id="Q9EQ00"/>
<dbReference type="OMA" id="QWSSAYF"/>
<dbReference type="OrthoDB" id="10067602at2759"/>
<dbReference type="PhylomeDB" id="Q9EQ00"/>
<dbReference type="TreeFam" id="TF105421"/>
<dbReference type="BioGRID-ORCS" id="252967">
    <property type="hits" value="1 hit in 78 CRISPR screens"/>
</dbReference>
<dbReference type="ChiTaRS" id="Ropn1l">
    <property type="organism name" value="mouse"/>
</dbReference>
<dbReference type="PRO" id="PR:Q9EQ00"/>
<dbReference type="Proteomes" id="UP000000589">
    <property type="component" value="Chromosome 15"/>
</dbReference>
<dbReference type="RNAct" id="Q9EQ00">
    <property type="molecule type" value="protein"/>
</dbReference>
<dbReference type="Bgee" id="ENSMUSG00000022236">
    <property type="expression patterns" value="Expressed in seminiferous tubule of testis and 108 other cell types or tissues"/>
</dbReference>
<dbReference type="GO" id="GO:0097729">
    <property type="term" value="C:9+2 motile cilium"/>
    <property type="evidence" value="ECO:0000305"/>
    <property type="project" value="UniProtKB"/>
</dbReference>
<dbReference type="GO" id="GO:0005576">
    <property type="term" value="C:extracellular region"/>
    <property type="evidence" value="ECO:0007669"/>
    <property type="project" value="GOC"/>
</dbReference>
<dbReference type="GO" id="GO:0031514">
    <property type="term" value="C:motile cilium"/>
    <property type="evidence" value="ECO:0000314"/>
    <property type="project" value="MGI"/>
</dbReference>
<dbReference type="GO" id="GO:0005654">
    <property type="term" value="C:nucleoplasm"/>
    <property type="evidence" value="ECO:0007669"/>
    <property type="project" value="Ensembl"/>
</dbReference>
<dbReference type="GO" id="GO:0001534">
    <property type="term" value="C:radial spoke"/>
    <property type="evidence" value="ECO:0000314"/>
    <property type="project" value="UniProtKB"/>
</dbReference>
<dbReference type="GO" id="GO:0036126">
    <property type="term" value="C:sperm flagellum"/>
    <property type="evidence" value="ECO:0000305"/>
    <property type="project" value="UniProtKB"/>
</dbReference>
<dbReference type="GO" id="GO:0042802">
    <property type="term" value="F:identical protein binding"/>
    <property type="evidence" value="ECO:0007669"/>
    <property type="project" value="Ensembl"/>
</dbReference>
<dbReference type="GO" id="GO:0003341">
    <property type="term" value="P:cilium movement"/>
    <property type="evidence" value="ECO:0000315"/>
    <property type="project" value="MGI"/>
</dbReference>
<dbReference type="GO" id="GO:0003351">
    <property type="term" value="P:epithelial cilium movement involved in extracellular fluid movement"/>
    <property type="evidence" value="ECO:0000305"/>
    <property type="project" value="UniProtKB"/>
</dbReference>
<dbReference type="GO" id="GO:0030317">
    <property type="term" value="P:flagellated sperm motility"/>
    <property type="evidence" value="ECO:0000315"/>
    <property type="project" value="MGI"/>
</dbReference>
<dbReference type="GO" id="GO:0007618">
    <property type="term" value="P:mating"/>
    <property type="evidence" value="ECO:0000305"/>
    <property type="project" value="UniProtKB"/>
</dbReference>
<dbReference type="GO" id="GO:0048240">
    <property type="term" value="P:sperm capacitation"/>
    <property type="evidence" value="ECO:0000315"/>
    <property type="project" value="MGI"/>
</dbReference>
<dbReference type="CDD" id="cd23019">
    <property type="entry name" value="DD_ROP"/>
    <property type="match status" value="1"/>
</dbReference>
<dbReference type="FunFam" id="1.20.890.10:FF:000004">
    <property type="entry name" value="ropporin-1-like protein isoform X2"/>
    <property type="match status" value="1"/>
</dbReference>
<dbReference type="Gene3D" id="1.20.890.10">
    <property type="entry name" value="cAMP-dependent protein kinase regulatory subunit, dimerization-anchoring domain"/>
    <property type="match status" value="1"/>
</dbReference>
<dbReference type="InterPro" id="IPR047844">
    <property type="entry name" value="ROP_DD"/>
</dbReference>
<dbReference type="PANTHER" id="PTHR14952">
    <property type="entry name" value="ROPPORIN-1-LIKE PROTEIN"/>
    <property type="match status" value="1"/>
</dbReference>
<dbReference type="PANTHER" id="PTHR14952:SF14">
    <property type="entry name" value="ROPPORIN-1-LIKE PROTEIN"/>
    <property type="match status" value="1"/>
</dbReference>
<dbReference type="SUPFAM" id="SSF47391">
    <property type="entry name" value="Dimerization-anchoring domain of cAMP-dependent PK regulatory subunit"/>
    <property type="match status" value="1"/>
</dbReference>
<proteinExistence type="evidence at protein level"/>
<reference key="1">
    <citation type="journal article" date="2002" name="Biol. Reprod.">
        <title>Identification of a murine testis complementary DNA encoding a homolog to human A-kinase anchoring protein-associated sperm protein.</title>
        <authorList>
            <person name="Anway M.D."/>
            <person name="Ravindranath N."/>
            <person name="Dym M."/>
            <person name="Griswold M.D."/>
        </authorList>
    </citation>
    <scope>NUCLEOTIDE SEQUENCE [MRNA]</scope>
    <scope>TISSUE SPECIFICITY</scope>
    <scope>DEVELOPMENTAL STAGE</scope>
    <source>
        <strain>BALB/cJ</strain>
        <tissue>Testis</tissue>
    </source>
</reference>
<reference key="2">
    <citation type="journal article" date="2004" name="Genome Res.">
        <title>The status, quality, and expansion of the NIH full-length cDNA project: the Mammalian Gene Collection (MGC).</title>
        <authorList>
            <consortium name="The MGC Project Team"/>
        </authorList>
    </citation>
    <scope>NUCLEOTIDE SEQUENCE [LARGE SCALE MRNA]</scope>
    <source>
        <tissue>Testis</tissue>
    </source>
</reference>
<reference key="3">
    <citation type="journal article" date="2001" name="J. Biol. Chem.">
        <title>Identification of sperm-specific proteins that interact with A-kinase anchoring proteins in a manner similar to the type II regulatory subunit of PKA.</title>
        <authorList>
            <person name="Carr D.W."/>
            <person name="Fujita A."/>
            <person name="Stentz C.L."/>
            <person name="Liberty G.A."/>
            <person name="Olson G.E."/>
            <person name="Narumiya S."/>
        </authorList>
    </citation>
    <scope>TISSUE SPECIFICITY</scope>
</reference>
<reference key="4">
    <citation type="journal article" date="2010" name="Cell">
        <title>A tissue-specific atlas of mouse protein phosphorylation and expression.</title>
        <authorList>
            <person name="Huttlin E.L."/>
            <person name="Jedrychowski M.P."/>
            <person name="Elias J.E."/>
            <person name="Goswami T."/>
            <person name="Rad R."/>
            <person name="Beausoleil S.A."/>
            <person name="Villen J."/>
            <person name="Haas W."/>
            <person name="Sowa M.E."/>
            <person name="Gygi S.P."/>
        </authorList>
    </citation>
    <scope>IDENTIFICATION BY MASS SPECTROMETRY [LARGE SCALE ANALYSIS]</scope>
    <source>
        <tissue>Kidney</tissue>
        <tissue>Testis</tissue>
    </source>
</reference>
<reference key="5">
    <citation type="journal article" date="2013" name="Biol. Reprod.">
        <title>Loss of R2D2 proteins ROPN1 and ROPN1L causes defects in murine sperm motility, phosphorylation, and fibrous sheath integrity.</title>
        <authorList>
            <person name="Fiedler S.E."/>
            <person name="Dudiki T."/>
            <person name="Vijayaraghavan S."/>
            <person name="Carr D.W."/>
        </authorList>
    </citation>
    <scope>FUNCTION</scope>
    <scope>DISRUPTION PHENOTYPE</scope>
    <scope>TISSUE SPECIFICITY</scope>
    <scope>DEVELOPMENTAL STAGE</scope>
    <scope>SUBCELLULAR LOCATION</scope>
</reference>
<reference key="6">
    <citation type="journal article" date="2016" name="Am. J. Transl. Res.">
        <title>FSCB phosphorylation regulates mouse spermatozoa capacitation through suppressing SUMOylation of ROPN1/ROPN1L.</title>
        <authorList>
            <person name="Zhang X."/>
            <person name="Chen M."/>
            <person name="Yu R."/>
            <person name="Liu B."/>
            <person name="Tian Z."/>
            <person name="Liu S."/>
        </authorList>
    </citation>
    <scope>SUMOYLATION</scope>
    <scope>INTERACTION WITH FSCB</scope>
</reference>
<reference key="7">
    <citation type="journal article" date="2022" name="Cell Rep.">
        <title>Differential requirements of IQUB for the assembly of radial spoke 1 and the motility of mouse cilia and flagella.</title>
        <authorList>
            <person name="Zhang X."/>
            <person name="Xiao Z."/>
            <person name="Zhang J."/>
            <person name="Xu C."/>
            <person name="Liu S."/>
            <person name="Cheng L."/>
            <person name="Zhou S."/>
            <person name="Zhao S."/>
            <person name="Zhang Y."/>
            <person name="Wu J."/>
            <person name="Wang Y."/>
            <person name="Liu M."/>
        </authorList>
    </citation>
    <scope>FUNCTION</scope>
    <scope>IDENTIFICATION IN RADIAL SPOKE COMPLEX 1</scope>
    <scope>IDENTIFICATION BY MASS SPECTROMETRY</scope>
</reference>
<reference key="8">
    <citation type="journal article" date="2021" name="Development">
        <title>CFAP61 is required for sperm flagellum formation and male fertility in human and mouse.</title>
        <authorList>
            <person name="Liu S."/>
            <person name="Zhang J."/>
            <person name="Kherraf Z.E."/>
            <person name="Sun S."/>
            <person name="Zhang X."/>
            <person name="Cazin C."/>
            <person name="Coutton C."/>
            <person name="Zouari R."/>
            <person name="Zhao S."/>
            <person name="Hu F."/>
            <person name="Fourati Ben Mustapha S."/>
            <person name="Arnoult C."/>
            <person name="Ray P.F."/>
            <person name="Liu M."/>
        </authorList>
    </citation>
    <scope>INTERACTION WITH CFAP61</scope>
</reference>
<comment type="function">
    <text evidence="4 7">Functions as part of axonemal radial spoke complexes that play an important part in the motility of sperm and cilia (PubMed:36417862). Important for male fertility. With ROPN1, involved in fibrous sheath integrity and sperm motility, plays a role in PKA-dependent signaling processes required for spermatozoa capacitation.</text>
</comment>
<comment type="subunit">
    <text evidence="1 5 6">Component of the axonemal radial spoke complex 1 (RS1), at least composed of spoke head proteins RSPH1, RSPH3, RSPH9 and the cilia-specific component RSPH4A or sperm-specific component RSPH6A, spoke stalk proteins RSPH14, DNAJB13, DYDC1, ROPN1L and NME5, and the anchor protein IQUB (PubMed:36417862). May interact with AKAP3 (By similarity). Interacts with FSCB; the interaction increases upon spermatozoa capacitation conditions (PubMed:27398160). Interacts with CFAP61 (PubMed:34792097).</text>
</comment>
<comment type="subcellular location">
    <subcellularLocation>
        <location evidence="4">Cell projection</location>
        <location evidence="4">Cilium</location>
        <location evidence="4">Flagellum</location>
    </subcellularLocation>
    <subcellularLocation>
        <location evidence="1">Cell projection</location>
        <location evidence="1">Cilium</location>
    </subcellularLocation>
</comment>
<comment type="tissue specificity">
    <text evidence="2 3 4">Testis-specific. Expression is restricted to germ cells.</text>
</comment>
<comment type="developmental stage">
    <text evidence="3 4">Expressed in testis at least from P5 to P40. Expression increases with sample age. Detected in the flagella of elongated spermatids, but the expression levels reduce as the sperm matures (heads move towards the center lumen) (PubMed:23303679).</text>
</comment>
<comment type="PTM">
    <text evidence="5">Sumoylated, sumoylation decreases upon spermatozoa capacitation conditions.</text>
</comment>
<comment type="disruption phenotype">
    <text evidence="4">Mutant mice have normal testicular morphology and spermatogenesis but have moderately impaired motility and increased levels of ROPN1 (PubMed:23303679). Double knockout animals for ROPN1 and ROPN1L are infertile with normal testicular morphology and spermatogenesis but defects in sperm morphology, thinning and shredding of the principal piece. Sperm is immotile (PubMed:23303679).</text>
</comment>
<comment type="similarity">
    <text evidence="8">Belongs to the ropporin family.</text>
</comment>
<comment type="sequence caution" evidence="8">
    <conflict type="frameshift">
        <sequence resource="EMBL-CDS" id="AAG40851"/>
    </conflict>
</comment>
<organism>
    <name type="scientific">Mus musculus</name>
    <name type="common">Mouse</name>
    <dbReference type="NCBI Taxonomy" id="10090"/>
    <lineage>
        <taxon>Eukaryota</taxon>
        <taxon>Metazoa</taxon>
        <taxon>Chordata</taxon>
        <taxon>Craniata</taxon>
        <taxon>Vertebrata</taxon>
        <taxon>Euteleostomi</taxon>
        <taxon>Mammalia</taxon>
        <taxon>Eutheria</taxon>
        <taxon>Euarchontoglires</taxon>
        <taxon>Glires</taxon>
        <taxon>Rodentia</taxon>
        <taxon>Myomorpha</taxon>
        <taxon>Muroidea</taxon>
        <taxon>Muridae</taxon>
        <taxon>Murinae</taxon>
        <taxon>Mus</taxon>
        <taxon>Mus</taxon>
    </lineage>
</organism>